<comment type="function">
    <text>Potential disease resistance protein.</text>
</comment>
<comment type="domain">
    <text evidence="1">The LRR repeats probably act as specificity determinant of pathogen recognition.</text>
</comment>
<comment type="similarity">
    <text evidence="3">Belongs to the disease resistance NB-LRR family. RPP13 subfamily.</text>
</comment>
<comment type="online information" name="NIB-LRRS">
    <link uri="http://niblrrs.ucdavis.edu"/>
    <text>Functional and comparative genomics of disease resistance gene homologs</text>
</comment>
<name>R13L3_ARATH</name>
<evidence type="ECO:0000250" key="1"/>
<evidence type="ECO:0000255" key="2"/>
<evidence type="ECO:0000305" key="3"/>
<organism>
    <name type="scientific">Arabidopsis thaliana</name>
    <name type="common">Mouse-ear cress</name>
    <dbReference type="NCBI Taxonomy" id="3702"/>
    <lineage>
        <taxon>Eukaryota</taxon>
        <taxon>Viridiplantae</taxon>
        <taxon>Streptophyta</taxon>
        <taxon>Embryophyta</taxon>
        <taxon>Tracheophyta</taxon>
        <taxon>Spermatophyta</taxon>
        <taxon>Magnoliopsida</taxon>
        <taxon>eudicotyledons</taxon>
        <taxon>Gunneridae</taxon>
        <taxon>Pentapetalae</taxon>
        <taxon>rosids</taxon>
        <taxon>malvids</taxon>
        <taxon>Brassicales</taxon>
        <taxon>Brassicaceae</taxon>
        <taxon>Camelineae</taxon>
        <taxon>Arabidopsis</taxon>
    </lineage>
</organism>
<protein>
    <recommendedName>
        <fullName>Putative disease resistance RPP13-like protein 3</fullName>
    </recommendedName>
</protein>
<accession>Q9STE7</accession>
<feature type="chain" id="PRO_0000212728" description="Putative disease resistance RPP13-like protein 3">
    <location>
        <begin position="1"/>
        <end position="847"/>
    </location>
</feature>
<feature type="domain" description="NB-ARC">
    <location>
        <begin position="143"/>
        <end position="453"/>
    </location>
</feature>
<feature type="coiled-coil region" evidence="2">
    <location>
        <begin position="24"/>
        <end position="41"/>
    </location>
</feature>
<feature type="binding site" evidence="2">
    <location>
        <begin position="192"/>
        <end position="199"/>
    </location>
    <ligand>
        <name>ATP</name>
        <dbReference type="ChEBI" id="CHEBI:30616"/>
    </ligand>
</feature>
<reference key="1">
    <citation type="journal article" date="2000" name="Nature">
        <title>Sequence and analysis of chromosome 3 of the plant Arabidopsis thaliana.</title>
        <authorList>
            <person name="Salanoubat M."/>
            <person name="Lemcke K."/>
            <person name="Rieger M."/>
            <person name="Ansorge W."/>
            <person name="Unseld M."/>
            <person name="Fartmann B."/>
            <person name="Valle G."/>
            <person name="Bloecker H."/>
            <person name="Perez-Alonso M."/>
            <person name="Obermaier B."/>
            <person name="Delseny M."/>
            <person name="Boutry M."/>
            <person name="Grivell L.A."/>
            <person name="Mache R."/>
            <person name="Puigdomenech P."/>
            <person name="De Simone V."/>
            <person name="Choisne N."/>
            <person name="Artiguenave F."/>
            <person name="Robert C."/>
            <person name="Brottier P."/>
            <person name="Wincker P."/>
            <person name="Cattolico L."/>
            <person name="Weissenbach J."/>
            <person name="Saurin W."/>
            <person name="Quetier F."/>
            <person name="Schaefer M."/>
            <person name="Mueller-Auer S."/>
            <person name="Gabel C."/>
            <person name="Fuchs M."/>
            <person name="Benes V."/>
            <person name="Wurmbach E."/>
            <person name="Drzonek H."/>
            <person name="Erfle H."/>
            <person name="Jordan N."/>
            <person name="Bangert S."/>
            <person name="Wiedelmann R."/>
            <person name="Kranz H."/>
            <person name="Voss H."/>
            <person name="Holland R."/>
            <person name="Brandt P."/>
            <person name="Nyakatura G."/>
            <person name="Vezzi A."/>
            <person name="D'Angelo M."/>
            <person name="Pallavicini A."/>
            <person name="Toppo S."/>
            <person name="Simionati B."/>
            <person name="Conrad A."/>
            <person name="Hornischer K."/>
            <person name="Kauer G."/>
            <person name="Loehnert T.-H."/>
            <person name="Nordsiek G."/>
            <person name="Reichelt J."/>
            <person name="Scharfe M."/>
            <person name="Schoen O."/>
            <person name="Bargues M."/>
            <person name="Terol J."/>
            <person name="Climent J."/>
            <person name="Navarro P."/>
            <person name="Collado C."/>
            <person name="Perez-Perez A."/>
            <person name="Ottenwaelder B."/>
            <person name="Duchemin D."/>
            <person name="Cooke R."/>
            <person name="Laudie M."/>
            <person name="Berger-Llauro C."/>
            <person name="Purnelle B."/>
            <person name="Masuy D."/>
            <person name="de Haan M."/>
            <person name="Maarse A.C."/>
            <person name="Alcaraz J.-P."/>
            <person name="Cottet A."/>
            <person name="Casacuberta E."/>
            <person name="Monfort A."/>
            <person name="Argiriou A."/>
            <person name="Flores M."/>
            <person name="Liguori R."/>
            <person name="Vitale D."/>
            <person name="Mannhaupt G."/>
            <person name="Haase D."/>
            <person name="Schoof H."/>
            <person name="Rudd S."/>
            <person name="Zaccaria P."/>
            <person name="Mewes H.-W."/>
            <person name="Mayer K.F.X."/>
            <person name="Kaul S."/>
            <person name="Town C.D."/>
            <person name="Koo H.L."/>
            <person name="Tallon L.J."/>
            <person name="Jenkins J."/>
            <person name="Rooney T."/>
            <person name="Rizzo M."/>
            <person name="Walts A."/>
            <person name="Utterback T."/>
            <person name="Fujii C.Y."/>
            <person name="Shea T.P."/>
            <person name="Creasy T.H."/>
            <person name="Haas B."/>
            <person name="Maiti R."/>
            <person name="Wu D."/>
            <person name="Peterson J."/>
            <person name="Van Aken S."/>
            <person name="Pai G."/>
            <person name="Militscher J."/>
            <person name="Sellers P."/>
            <person name="Gill J.E."/>
            <person name="Feldblyum T.V."/>
            <person name="Preuss D."/>
            <person name="Lin X."/>
            <person name="Nierman W.C."/>
            <person name="Salzberg S.L."/>
            <person name="White O."/>
            <person name="Venter J.C."/>
            <person name="Fraser C.M."/>
            <person name="Kaneko T."/>
            <person name="Nakamura Y."/>
            <person name="Sato S."/>
            <person name="Kato T."/>
            <person name="Asamizu E."/>
            <person name="Sasamoto S."/>
            <person name="Kimura T."/>
            <person name="Idesawa K."/>
            <person name="Kawashima K."/>
            <person name="Kishida Y."/>
            <person name="Kiyokawa C."/>
            <person name="Kohara M."/>
            <person name="Matsumoto M."/>
            <person name="Matsuno A."/>
            <person name="Muraki A."/>
            <person name="Nakayama S."/>
            <person name="Nakazaki N."/>
            <person name="Shinpo S."/>
            <person name="Takeuchi C."/>
            <person name="Wada T."/>
            <person name="Watanabe A."/>
            <person name="Yamada M."/>
            <person name="Yasuda M."/>
            <person name="Tabata S."/>
        </authorList>
    </citation>
    <scope>NUCLEOTIDE SEQUENCE [LARGE SCALE GENOMIC DNA]</scope>
    <source>
        <strain>cv. Columbia</strain>
    </source>
</reference>
<reference key="2">
    <citation type="journal article" date="2017" name="Plant J.">
        <title>Araport11: a complete reannotation of the Arabidopsis thaliana reference genome.</title>
        <authorList>
            <person name="Cheng C.Y."/>
            <person name="Krishnakumar V."/>
            <person name="Chan A.P."/>
            <person name="Thibaud-Nissen F."/>
            <person name="Schobel S."/>
            <person name="Town C.D."/>
        </authorList>
    </citation>
    <scope>GENOME REANNOTATION</scope>
    <source>
        <strain>cv. Columbia</strain>
    </source>
</reference>
<dbReference type="EMBL" id="AL096859">
    <property type="protein sequence ID" value="CAB51192.1"/>
    <property type="molecule type" value="Genomic_DNA"/>
</dbReference>
<dbReference type="EMBL" id="CP002686">
    <property type="protein sequence ID" value="AEE78198.1"/>
    <property type="molecule type" value="Genomic_DNA"/>
</dbReference>
<dbReference type="PIR" id="T12977">
    <property type="entry name" value="T12977"/>
</dbReference>
<dbReference type="RefSeq" id="NP_190257.1">
    <property type="nucleotide sequence ID" value="NM_114540.2"/>
</dbReference>
<dbReference type="SMR" id="Q9STE7"/>
<dbReference type="BioGRID" id="9146">
    <property type="interactions" value="1"/>
</dbReference>
<dbReference type="STRING" id="3702.Q9STE7"/>
<dbReference type="iPTMnet" id="Q9STE7"/>
<dbReference type="PaxDb" id="3702-AT3G46730.1"/>
<dbReference type="ProteomicsDB" id="236208"/>
<dbReference type="EnsemblPlants" id="AT3G46730.1">
    <property type="protein sequence ID" value="AT3G46730.1"/>
    <property type="gene ID" value="AT3G46730"/>
</dbReference>
<dbReference type="GeneID" id="823826"/>
<dbReference type="Gramene" id="AT3G46730.1">
    <property type="protein sequence ID" value="AT3G46730.1"/>
    <property type="gene ID" value="AT3G46730"/>
</dbReference>
<dbReference type="KEGG" id="ath:AT3G46730"/>
<dbReference type="Araport" id="AT3G46730"/>
<dbReference type="TAIR" id="AT3G46730"/>
<dbReference type="eggNOG" id="KOG4658">
    <property type="taxonomic scope" value="Eukaryota"/>
</dbReference>
<dbReference type="HOGENOM" id="CLU_000837_25_4_1"/>
<dbReference type="InParanoid" id="Q9STE7"/>
<dbReference type="OMA" id="RTNEWHE"/>
<dbReference type="PhylomeDB" id="Q9STE7"/>
<dbReference type="PRO" id="PR:Q9STE7"/>
<dbReference type="Proteomes" id="UP000006548">
    <property type="component" value="Chromosome 3"/>
</dbReference>
<dbReference type="ExpressionAtlas" id="Q9STE7">
    <property type="expression patterns" value="baseline and differential"/>
</dbReference>
<dbReference type="GO" id="GO:0043531">
    <property type="term" value="F:ADP binding"/>
    <property type="evidence" value="ECO:0007669"/>
    <property type="project" value="InterPro"/>
</dbReference>
<dbReference type="GO" id="GO:0005524">
    <property type="term" value="F:ATP binding"/>
    <property type="evidence" value="ECO:0007669"/>
    <property type="project" value="UniProtKB-KW"/>
</dbReference>
<dbReference type="GO" id="GO:0006952">
    <property type="term" value="P:defense response"/>
    <property type="evidence" value="ECO:0007669"/>
    <property type="project" value="UniProtKB-KW"/>
</dbReference>
<dbReference type="GO" id="GO:0051707">
    <property type="term" value="P:response to other organism"/>
    <property type="evidence" value="ECO:0007669"/>
    <property type="project" value="UniProtKB-ARBA"/>
</dbReference>
<dbReference type="CDD" id="cd14798">
    <property type="entry name" value="RX-CC_like"/>
    <property type="match status" value="1"/>
</dbReference>
<dbReference type="FunFam" id="3.40.50.300:FF:001091">
    <property type="entry name" value="Probable disease resistance protein At1g61300"/>
    <property type="match status" value="1"/>
</dbReference>
<dbReference type="FunFam" id="1.10.10.10:FF:000322">
    <property type="entry name" value="Probable disease resistance protein At1g63360"/>
    <property type="match status" value="1"/>
</dbReference>
<dbReference type="FunFam" id="1.10.8.430:FF:000003">
    <property type="entry name" value="Probable disease resistance protein At5g66910"/>
    <property type="match status" value="1"/>
</dbReference>
<dbReference type="Gene3D" id="1.20.5.4130">
    <property type="match status" value="1"/>
</dbReference>
<dbReference type="Gene3D" id="1.10.8.430">
    <property type="entry name" value="Helical domain of apoptotic protease-activating factors"/>
    <property type="match status" value="1"/>
</dbReference>
<dbReference type="Gene3D" id="3.40.50.300">
    <property type="entry name" value="P-loop containing nucleotide triphosphate hydrolases"/>
    <property type="match status" value="1"/>
</dbReference>
<dbReference type="Gene3D" id="3.80.10.10">
    <property type="entry name" value="Ribonuclease Inhibitor"/>
    <property type="match status" value="1"/>
</dbReference>
<dbReference type="Gene3D" id="1.10.10.10">
    <property type="entry name" value="Winged helix-like DNA-binding domain superfamily/Winged helix DNA-binding domain"/>
    <property type="match status" value="1"/>
</dbReference>
<dbReference type="InterPro" id="IPR042197">
    <property type="entry name" value="Apaf_helical"/>
</dbReference>
<dbReference type="InterPro" id="IPR044974">
    <property type="entry name" value="Disease_R_plants"/>
</dbReference>
<dbReference type="InterPro" id="IPR032675">
    <property type="entry name" value="LRR_dom_sf"/>
</dbReference>
<dbReference type="InterPro" id="IPR055414">
    <property type="entry name" value="LRR_R13L4/SHOC2-like"/>
</dbReference>
<dbReference type="InterPro" id="IPR002182">
    <property type="entry name" value="NB-ARC"/>
</dbReference>
<dbReference type="InterPro" id="IPR027417">
    <property type="entry name" value="P-loop_NTPase"/>
</dbReference>
<dbReference type="InterPro" id="IPR038005">
    <property type="entry name" value="RX-like_CC"/>
</dbReference>
<dbReference type="InterPro" id="IPR041118">
    <property type="entry name" value="Rx_N"/>
</dbReference>
<dbReference type="InterPro" id="IPR036388">
    <property type="entry name" value="WH-like_DNA-bd_sf"/>
</dbReference>
<dbReference type="PANTHER" id="PTHR23155">
    <property type="entry name" value="DISEASE RESISTANCE PROTEIN RP"/>
    <property type="match status" value="1"/>
</dbReference>
<dbReference type="PANTHER" id="PTHR23155:SF1193">
    <property type="entry name" value="DISEASE RESISTANCE PROTEIN RPP13-RELATED"/>
    <property type="match status" value="1"/>
</dbReference>
<dbReference type="Pfam" id="PF23598">
    <property type="entry name" value="LRR_14"/>
    <property type="match status" value="1"/>
</dbReference>
<dbReference type="Pfam" id="PF00931">
    <property type="entry name" value="NB-ARC"/>
    <property type="match status" value="1"/>
</dbReference>
<dbReference type="Pfam" id="PF18052">
    <property type="entry name" value="Rx_N"/>
    <property type="match status" value="1"/>
</dbReference>
<dbReference type="Pfam" id="PF23559">
    <property type="entry name" value="WH_DRP"/>
    <property type="match status" value="1"/>
</dbReference>
<dbReference type="PRINTS" id="PR00364">
    <property type="entry name" value="DISEASERSIST"/>
</dbReference>
<dbReference type="SUPFAM" id="SSF52540">
    <property type="entry name" value="P-loop containing nucleoside triphosphate hydrolases"/>
    <property type="match status" value="1"/>
</dbReference>
<dbReference type="SUPFAM" id="SSF52047">
    <property type="entry name" value="RNI-like"/>
    <property type="match status" value="1"/>
</dbReference>
<gene>
    <name type="primary">RPP13L3</name>
    <name type="ordered locus">At3g46730</name>
    <name type="ORF">T6H20.240</name>
</gene>
<proteinExistence type="inferred from homology"/>
<keyword id="KW-0067">ATP-binding</keyword>
<keyword id="KW-0175">Coiled coil</keyword>
<keyword id="KW-0547">Nucleotide-binding</keyword>
<keyword id="KW-0611">Plant defense</keyword>
<keyword id="KW-1185">Reference proteome</keyword>
<keyword id="KW-0677">Repeat</keyword>
<sequence length="847" mass="98142">MVDAVTGFVLNKIGGYLINEVLALMGVKDDLEELKTELTCIHGYLKDVEAREREDEVSKEWTKLVLDIAYDIEDVLDTYFLKLEERSLRRGLLRLTNKIGKKRDAYNIVEDIRTLKRRILDITRKRETFGIGSFNEPRGENITNVRVRQLRRAPPVDQEELVVGLEDDVKILLVKLLSDNEKDKSYIISIFGMGGLGKTALARKLYNSGDVKRRFDCRAWTYVSQEYKTRDILIRIIRSLGIVSAEEMEKIKMFEEDEELEVYLYGLLEGKNYMVVVDDVWDPDAWESLKRALPCDHRGSKVIITTRIRAIAEGVEGTVYAHKLRFLTFEESWTLFERKAFSNIEKVDEDLQRTGKEMVKKCGGLPLAIVVLSGLLSRKRTNEWHEVCASLWRRLKDNSIHISTVFDLSFKEMRHELKLCFLYFSVFPEDYEIKVEKLIHLLVAEGFIQEDEEMMMEDVARCYIDELVDRSLVKAERIERGKVMSCRIHDLLRDLAIKKAKELNFVNVYNEKQHSSDICRREVVHHLMNDYYLCDRRVNKRMRSFLFIGERRGFGYVNTTNLKLKLLRVLNMEGLLFVSKNISNTLPDVIGELIHLRYLGIADTYVSILPASISNLRFLQTLDASGNDPFQYTTDLSKLTSLRHVIGKFVGECLIGEGVNLQTLRSISSYSWSKLNHELLRNLQDLEIYDHSKWVDQRRVPLNFVSFSKPKNLRVLKLEMRNFKLSSESRTTIGLVDVNFPSLESLTLVGTTLEENSMPALQKLPRLEDLVLKDCNYSGVKIMSISAQGFGRLKNLEMSMERRGHGLDELRIEEEAMPSLIKLTVKGRLELTKLMIPDRLKAFVRRN</sequence>